<gene>
    <name type="primary">JAL17</name>
    <name type="ordered locus">At1g60110</name>
    <name type="ORF">T13D8.2</name>
</gene>
<name>JAL17_ARATH</name>
<comment type="similarity">
    <text evidence="1 3">Belongs to the jacalin lectin family.</text>
</comment>
<dbReference type="EMBL" id="AC004473">
    <property type="protein sequence ID" value="AAC24046.1"/>
    <property type="molecule type" value="Genomic_DNA"/>
</dbReference>
<dbReference type="EMBL" id="CP002684">
    <property type="protein sequence ID" value="AEE33660.1"/>
    <property type="molecule type" value="Genomic_DNA"/>
</dbReference>
<dbReference type="PIR" id="T02265">
    <property type="entry name" value="T02265"/>
</dbReference>
<dbReference type="RefSeq" id="NP_001319274.1">
    <property type="nucleotide sequence ID" value="NM_001333879.1"/>
</dbReference>
<dbReference type="SMR" id="O80736"/>
<dbReference type="FunCoup" id="O80736">
    <property type="interactions" value="4"/>
</dbReference>
<dbReference type="IntAct" id="O80736">
    <property type="interactions" value="2"/>
</dbReference>
<dbReference type="STRING" id="3702.O80736"/>
<dbReference type="iPTMnet" id="O80736"/>
<dbReference type="PaxDb" id="3702-AT1G60110.1"/>
<dbReference type="ProteomicsDB" id="250655"/>
<dbReference type="EnsemblPlants" id="AT1G60110.1">
    <property type="protein sequence ID" value="AT1G60110.1"/>
    <property type="gene ID" value="AT1G60110"/>
</dbReference>
<dbReference type="GeneID" id="842306"/>
<dbReference type="Gramene" id="AT1G60110.1">
    <property type="protein sequence ID" value="AT1G60110.1"/>
    <property type="gene ID" value="AT1G60110"/>
</dbReference>
<dbReference type="KEGG" id="ath:AT1G60110"/>
<dbReference type="Araport" id="AT1G60110"/>
<dbReference type="TAIR" id="AT1G60110"/>
<dbReference type="eggNOG" id="ENOG502SCUZ">
    <property type="taxonomic scope" value="Eukaryota"/>
</dbReference>
<dbReference type="HOGENOM" id="CLU_041730_0_0_1"/>
<dbReference type="InParanoid" id="O80736"/>
<dbReference type="PhylomeDB" id="O80736"/>
<dbReference type="PRO" id="PR:O80736"/>
<dbReference type="Proteomes" id="UP000006548">
    <property type="component" value="Chromosome 1"/>
</dbReference>
<dbReference type="ExpressionAtlas" id="O80736">
    <property type="expression patterns" value="baseline and differential"/>
</dbReference>
<dbReference type="GO" id="GO:0030246">
    <property type="term" value="F:carbohydrate binding"/>
    <property type="evidence" value="ECO:0007669"/>
    <property type="project" value="UniProtKB-KW"/>
</dbReference>
<dbReference type="CDD" id="cd09612">
    <property type="entry name" value="Jacalin"/>
    <property type="match status" value="4"/>
</dbReference>
<dbReference type="FunFam" id="2.100.10.30:FF:000001">
    <property type="entry name" value="Jacalin-related lectin 33"/>
    <property type="match status" value="4"/>
</dbReference>
<dbReference type="Gene3D" id="2.100.10.30">
    <property type="entry name" value="Jacalin-like lectin domain"/>
    <property type="match status" value="4"/>
</dbReference>
<dbReference type="InterPro" id="IPR001229">
    <property type="entry name" value="Jacalin-like_lectin_dom"/>
</dbReference>
<dbReference type="InterPro" id="IPR033734">
    <property type="entry name" value="Jacalin-like_lectin_dom_plant"/>
</dbReference>
<dbReference type="InterPro" id="IPR036404">
    <property type="entry name" value="Jacalin-like_lectin_dom_sf"/>
</dbReference>
<dbReference type="PANTHER" id="PTHR47293:SF66">
    <property type="entry name" value="JACALIN-RELATED LECTIN 11-RELATED"/>
    <property type="match status" value="1"/>
</dbReference>
<dbReference type="PANTHER" id="PTHR47293">
    <property type="entry name" value="JACALIN-RELATED LECTIN 3"/>
    <property type="match status" value="1"/>
</dbReference>
<dbReference type="Pfam" id="PF01419">
    <property type="entry name" value="Jacalin"/>
    <property type="match status" value="4"/>
</dbReference>
<dbReference type="SMART" id="SM00915">
    <property type="entry name" value="Jacalin"/>
    <property type="match status" value="4"/>
</dbReference>
<dbReference type="SUPFAM" id="SSF51101">
    <property type="entry name" value="Mannose-binding lectins"/>
    <property type="match status" value="4"/>
</dbReference>
<dbReference type="PROSITE" id="PS51752">
    <property type="entry name" value="JACALIN_LECTIN"/>
    <property type="match status" value="4"/>
</dbReference>
<proteinExistence type="inferred from homology"/>
<organism>
    <name type="scientific">Arabidopsis thaliana</name>
    <name type="common">Mouse-ear cress</name>
    <dbReference type="NCBI Taxonomy" id="3702"/>
    <lineage>
        <taxon>Eukaryota</taxon>
        <taxon>Viridiplantae</taxon>
        <taxon>Streptophyta</taxon>
        <taxon>Embryophyta</taxon>
        <taxon>Tracheophyta</taxon>
        <taxon>Spermatophyta</taxon>
        <taxon>Magnoliopsida</taxon>
        <taxon>eudicotyledons</taxon>
        <taxon>Gunneridae</taxon>
        <taxon>Pentapetalae</taxon>
        <taxon>rosids</taxon>
        <taxon>malvids</taxon>
        <taxon>Brassicales</taxon>
        <taxon>Brassicaceae</taxon>
        <taxon>Camelineae</taxon>
        <taxon>Arabidopsis</taxon>
    </lineage>
</organism>
<sequence>MAQRLEAEGNKNFKGKSKWDDGSDKDDIGKISVRCEDGGITYIRFDYIKSGQPQYNTFPGNPGRGILQTFDINHKNDEHLESVEGYYDPKSDAIKGLQFKTNMRISELIGYANDGATKFSLAVEGKKIIGFHGAYNTYLNSLGAYVTWIVPTKLKAKGGKGGKEWNDGADHEGITKIYVRGGYEGLQYVKFDYIKDGQQIYGSPHGVRGRGFTELFEINHLDKEYLISVEGYYDEGESGVIQGIQFKTNIRTSELMGDNRGRKFSLAANGKKIIGFHGYAEKNLNSLGAYFTTSPFTKLEVGTTSADLWDDGTFDGIRNVYIHYDGDAVCCVEVDYDNKGKVEKREHGIMIAPFIERGEFVVDYPNEFITSVEVTISKQNDSPVPSLTSETVASLTFKTSKGRTSSTFGSPATKKFVLQSKGCGVVGFLGRSSYYTYALGAHFCPLPPLPDGEKVEAKGGDGGASWDDGRFDCIRKIYIGHSEMGIAFVKFLYDKDNKVVVGDDHGSKTLLGVDEFELEHPDEYLISVEGSYDVVDGSESEVIRMLRFKTNMRTSQLFGHETTSNFTLQKECHKIVGFHGKIGEMLHQIGVHVLPITD</sequence>
<reference key="1">
    <citation type="journal article" date="2000" name="Nature">
        <title>Sequence and analysis of chromosome 1 of the plant Arabidopsis thaliana.</title>
        <authorList>
            <person name="Theologis A."/>
            <person name="Ecker J.R."/>
            <person name="Palm C.J."/>
            <person name="Federspiel N.A."/>
            <person name="Kaul S."/>
            <person name="White O."/>
            <person name="Alonso J."/>
            <person name="Altafi H."/>
            <person name="Araujo R."/>
            <person name="Bowman C.L."/>
            <person name="Brooks S.Y."/>
            <person name="Buehler E."/>
            <person name="Chan A."/>
            <person name="Chao Q."/>
            <person name="Chen H."/>
            <person name="Cheuk R.F."/>
            <person name="Chin C.W."/>
            <person name="Chung M.K."/>
            <person name="Conn L."/>
            <person name="Conway A.B."/>
            <person name="Conway A.R."/>
            <person name="Creasy T.H."/>
            <person name="Dewar K."/>
            <person name="Dunn P."/>
            <person name="Etgu P."/>
            <person name="Feldblyum T.V."/>
            <person name="Feng J.-D."/>
            <person name="Fong B."/>
            <person name="Fujii C.Y."/>
            <person name="Gill J.E."/>
            <person name="Goldsmith A.D."/>
            <person name="Haas B."/>
            <person name="Hansen N.F."/>
            <person name="Hughes B."/>
            <person name="Huizar L."/>
            <person name="Hunter J.L."/>
            <person name="Jenkins J."/>
            <person name="Johnson-Hopson C."/>
            <person name="Khan S."/>
            <person name="Khaykin E."/>
            <person name="Kim C.J."/>
            <person name="Koo H.L."/>
            <person name="Kremenetskaia I."/>
            <person name="Kurtz D.B."/>
            <person name="Kwan A."/>
            <person name="Lam B."/>
            <person name="Langin-Hooper S."/>
            <person name="Lee A."/>
            <person name="Lee J.M."/>
            <person name="Lenz C.A."/>
            <person name="Li J.H."/>
            <person name="Li Y.-P."/>
            <person name="Lin X."/>
            <person name="Liu S.X."/>
            <person name="Liu Z.A."/>
            <person name="Luros J.S."/>
            <person name="Maiti R."/>
            <person name="Marziali A."/>
            <person name="Militscher J."/>
            <person name="Miranda M."/>
            <person name="Nguyen M."/>
            <person name="Nierman W.C."/>
            <person name="Osborne B.I."/>
            <person name="Pai G."/>
            <person name="Peterson J."/>
            <person name="Pham P.K."/>
            <person name="Rizzo M."/>
            <person name="Rooney T."/>
            <person name="Rowley D."/>
            <person name="Sakano H."/>
            <person name="Salzberg S.L."/>
            <person name="Schwartz J.R."/>
            <person name="Shinn P."/>
            <person name="Southwick A.M."/>
            <person name="Sun H."/>
            <person name="Tallon L.J."/>
            <person name="Tambunga G."/>
            <person name="Toriumi M.J."/>
            <person name="Town C.D."/>
            <person name="Utterback T."/>
            <person name="Van Aken S."/>
            <person name="Vaysberg M."/>
            <person name="Vysotskaia V.S."/>
            <person name="Walker M."/>
            <person name="Wu D."/>
            <person name="Yu G."/>
            <person name="Fraser C.M."/>
            <person name="Venter J.C."/>
            <person name="Davis R.W."/>
        </authorList>
    </citation>
    <scope>NUCLEOTIDE SEQUENCE [LARGE SCALE GENOMIC DNA]</scope>
    <source>
        <strain>cv. Columbia</strain>
    </source>
</reference>
<reference key="2">
    <citation type="journal article" date="2017" name="Plant J.">
        <title>Araport11: a complete reannotation of the Arabidopsis thaliana reference genome.</title>
        <authorList>
            <person name="Cheng C.Y."/>
            <person name="Krishnakumar V."/>
            <person name="Chan A.P."/>
            <person name="Thibaud-Nissen F."/>
            <person name="Schobel S."/>
            <person name="Town C.D."/>
        </authorList>
    </citation>
    <scope>GENOME REANNOTATION</scope>
    <source>
        <strain>cv. Columbia</strain>
    </source>
</reference>
<reference key="3">
    <citation type="journal article" date="2008" name="Plant Cell Physiol.">
        <title>Antagonistic jacalin-related lectins regulate the size of ER body-type beta-glucosidase complexes in Arabidopsis thaliana.</title>
        <authorList>
            <person name="Nagano A.J."/>
            <person name="Fukao Y."/>
            <person name="Fujiwara M."/>
            <person name="Nishimura M."/>
            <person name="Hara-Nishimura I."/>
        </authorList>
    </citation>
    <scope>GENE FAMILY</scope>
    <scope>NOMENCLATURE</scope>
</reference>
<evidence type="ECO:0000255" key="1">
    <source>
        <dbReference type="PROSITE-ProRule" id="PRU01088"/>
    </source>
</evidence>
<evidence type="ECO:0000256" key="2">
    <source>
        <dbReference type="SAM" id="MobiDB-lite"/>
    </source>
</evidence>
<evidence type="ECO:0000305" key="3"/>
<accession>O80736</accession>
<protein>
    <recommendedName>
        <fullName>Jacalin-related lectin 17</fullName>
    </recommendedName>
</protein>
<keyword id="KW-0430">Lectin</keyword>
<keyword id="KW-1185">Reference proteome</keyword>
<keyword id="KW-0677">Repeat</keyword>
<feature type="chain" id="PRO_0000430385" description="Jacalin-related lectin 17">
    <location>
        <begin position="1"/>
        <end position="598"/>
    </location>
</feature>
<feature type="domain" description="Jacalin-type lectin 1" evidence="1">
    <location>
        <begin position="2"/>
        <end position="148"/>
    </location>
</feature>
<feature type="domain" description="Jacalin-type lectin 2" evidence="1">
    <location>
        <begin position="151"/>
        <end position="293"/>
    </location>
</feature>
<feature type="domain" description="Jacalin-type lectin 3" evidence="1">
    <location>
        <begin position="295"/>
        <end position="445"/>
    </location>
</feature>
<feature type="domain" description="Jacalin-type lectin 4" evidence="1">
    <location>
        <begin position="452"/>
        <end position="595"/>
    </location>
</feature>
<feature type="region of interest" description="Disordered" evidence="2">
    <location>
        <begin position="1"/>
        <end position="23"/>
    </location>
</feature>